<dbReference type="EC" id="2.6.1.9"/>
<dbReference type="EMBL" id="AE004439">
    <property type="protein sequence ID" value="AAK02922.1"/>
    <property type="molecule type" value="Genomic_DNA"/>
</dbReference>
<dbReference type="SMR" id="Q9CMI7"/>
<dbReference type="STRING" id="272843.PM0838"/>
<dbReference type="EnsemblBacteria" id="AAK02922">
    <property type="protein sequence ID" value="AAK02922"/>
    <property type="gene ID" value="PM0838"/>
</dbReference>
<dbReference type="KEGG" id="pmu:PM0838"/>
<dbReference type="PATRIC" id="fig|272843.6.peg.849"/>
<dbReference type="HOGENOM" id="CLU_017584_3_3_6"/>
<dbReference type="OrthoDB" id="9813612at2"/>
<dbReference type="UniPathway" id="UPA00031">
    <property type="reaction ID" value="UER00012"/>
</dbReference>
<dbReference type="Proteomes" id="UP000000809">
    <property type="component" value="Chromosome"/>
</dbReference>
<dbReference type="GO" id="GO:0004400">
    <property type="term" value="F:histidinol-phosphate transaminase activity"/>
    <property type="evidence" value="ECO:0007669"/>
    <property type="project" value="UniProtKB-UniRule"/>
</dbReference>
<dbReference type="GO" id="GO:0030170">
    <property type="term" value="F:pyridoxal phosphate binding"/>
    <property type="evidence" value="ECO:0007669"/>
    <property type="project" value="InterPro"/>
</dbReference>
<dbReference type="GO" id="GO:0000105">
    <property type="term" value="P:L-histidine biosynthetic process"/>
    <property type="evidence" value="ECO:0007669"/>
    <property type="project" value="UniProtKB-UniRule"/>
</dbReference>
<dbReference type="CDD" id="cd00609">
    <property type="entry name" value="AAT_like"/>
    <property type="match status" value="1"/>
</dbReference>
<dbReference type="Gene3D" id="3.90.1150.10">
    <property type="entry name" value="Aspartate Aminotransferase, domain 1"/>
    <property type="match status" value="1"/>
</dbReference>
<dbReference type="Gene3D" id="3.40.640.10">
    <property type="entry name" value="Type I PLP-dependent aspartate aminotransferase-like (Major domain)"/>
    <property type="match status" value="1"/>
</dbReference>
<dbReference type="HAMAP" id="MF_01023">
    <property type="entry name" value="HisC_aminotrans_2"/>
    <property type="match status" value="1"/>
</dbReference>
<dbReference type="InterPro" id="IPR001917">
    <property type="entry name" value="Aminotrans_II_pyridoxalP_BS"/>
</dbReference>
<dbReference type="InterPro" id="IPR004839">
    <property type="entry name" value="Aminotransferase_I/II_large"/>
</dbReference>
<dbReference type="InterPro" id="IPR005861">
    <property type="entry name" value="HisP_aminotrans"/>
</dbReference>
<dbReference type="InterPro" id="IPR050106">
    <property type="entry name" value="HistidinolP_aminotransfase"/>
</dbReference>
<dbReference type="InterPro" id="IPR015424">
    <property type="entry name" value="PyrdxlP-dep_Trfase"/>
</dbReference>
<dbReference type="InterPro" id="IPR015421">
    <property type="entry name" value="PyrdxlP-dep_Trfase_major"/>
</dbReference>
<dbReference type="InterPro" id="IPR015422">
    <property type="entry name" value="PyrdxlP-dep_Trfase_small"/>
</dbReference>
<dbReference type="NCBIfam" id="TIGR01141">
    <property type="entry name" value="hisC"/>
    <property type="match status" value="1"/>
</dbReference>
<dbReference type="PANTHER" id="PTHR43643:SF3">
    <property type="entry name" value="HISTIDINOL-PHOSPHATE AMINOTRANSFERASE"/>
    <property type="match status" value="1"/>
</dbReference>
<dbReference type="PANTHER" id="PTHR43643">
    <property type="entry name" value="HISTIDINOL-PHOSPHATE AMINOTRANSFERASE 2"/>
    <property type="match status" value="1"/>
</dbReference>
<dbReference type="Pfam" id="PF00155">
    <property type="entry name" value="Aminotran_1_2"/>
    <property type="match status" value="1"/>
</dbReference>
<dbReference type="SUPFAM" id="SSF53383">
    <property type="entry name" value="PLP-dependent transferases"/>
    <property type="match status" value="1"/>
</dbReference>
<dbReference type="PROSITE" id="PS00599">
    <property type="entry name" value="AA_TRANSFER_CLASS_2"/>
    <property type="match status" value="1"/>
</dbReference>
<organism>
    <name type="scientific">Pasteurella multocida (strain Pm70)</name>
    <dbReference type="NCBI Taxonomy" id="272843"/>
    <lineage>
        <taxon>Bacteria</taxon>
        <taxon>Pseudomonadati</taxon>
        <taxon>Pseudomonadota</taxon>
        <taxon>Gammaproteobacteria</taxon>
        <taxon>Pasteurellales</taxon>
        <taxon>Pasteurellaceae</taxon>
        <taxon>Pasteurella</taxon>
    </lineage>
</organism>
<proteinExistence type="inferred from homology"/>
<evidence type="ECO:0000250" key="1"/>
<evidence type="ECO:0000305" key="2"/>
<feature type="chain" id="PRO_0000153411" description="Histidinol-phosphate aminotransferase 2">
    <location>
        <begin position="1"/>
        <end position="365"/>
    </location>
</feature>
<feature type="modified residue" description="N6-(pyridoxal phosphate)lysine" evidence="1">
    <location>
        <position position="226"/>
    </location>
</feature>
<sequence>MQYINIVNEGVKQLHPYQAGKPIEELERELGITNIIKLASNENPFGLPDSAKQAILAELDNLTRYPDSNGFYFKQTVAKKFGLSPEQITLGNGSNDLLELVAHTFANEQDEILFSQYAFIVYPLVTQAINAKKVEIPAKNYGADLDGFLQAISDKTKLIYLANPNNPTGTFLSAGEISQFLNQVPAHVIVVLDEAYTEFTLPEERVDSFTLLKKHSNLVICRTLSKAYGLAGLRIGYAVSSAEIADLFNRVRQPFNCNSLALAAATAVLHDDAFIAKVAENNRQGLKLLEDFFTAKGLNYIPSKGNFVMLDVNQPALPIYQALLQKGVIVRPIAGYGLPNHLRISIGLPEENQRFLLALNEVLGL</sequence>
<name>HIS82_PASMU</name>
<gene>
    <name type="primary">hisC2</name>
    <name type="synonym">hisH_1</name>
    <name type="ordered locus">PM0838</name>
</gene>
<keyword id="KW-0028">Amino-acid biosynthesis</keyword>
<keyword id="KW-0032">Aminotransferase</keyword>
<keyword id="KW-0368">Histidine biosynthesis</keyword>
<keyword id="KW-0663">Pyridoxal phosphate</keyword>
<keyword id="KW-1185">Reference proteome</keyword>
<keyword id="KW-0808">Transferase</keyword>
<reference key="1">
    <citation type="journal article" date="2001" name="Proc. Natl. Acad. Sci. U.S.A.">
        <title>Complete genomic sequence of Pasteurella multocida Pm70.</title>
        <authorList>
            <person name="May B.J."/>
            <person name="Zhang Q."/>
            <person name="Li L.L."/>
            <person name="Paustian M.L."/>
            <person name="Whittam T.S."/>
            <person name="Kapur V."/>
        </authorList>
    </citation>
    <scope>NUCLEOTIDE SEQUENCE [LARGE SCALE GENOMIC DNA]</scope>
    <source>
        <strain>Pm70</strain>
    </source>
</reference>
<comment type="catalytic activity">
    <reaction>
        <text>L-histidinol phosphate + 2-oxoglutarate = 3-(imidazol-4-yl)-2-oxopropyl phosphate + L-glutamate</text>
        <dbReference type="Rhea" id="RHEA:23744"/>
        <dbReference type="ChEBI" id="CHEBI:16810"/>
        <dbReference type="ChEBI" id="CHEBI:29985"/>
        <dbReference type="ChEBI" id="CHEBI:57766"/>
        <dbReference type="ChEBI" id="CHEBI:57980"/>
        <dbReference type="EC" id="2.6.1.9"/>
    </reaction>
</comment>
<comment type="cofactor">
    <cofactor evidence="1">
        <name>pyridoxal 5'-phosphate</name>
        <dbReference type="ChEBI" id="CHEBI:597326"/>
    </cofactor>
</comment>
<comment type="pathway">
    <text>Amino-acid biosynthesis; L-histidine biosynthesis; L-histidine from 5-phospho-alpha-D-ribose 1-diphosphate: step 7/9.</text>
</comment>
<comment type="subunit">
    <text evidence="1">Homodimer.</text>
</comment>
<comment type="similarity">
    <text evidence="2">Belongs to the class-II pyridoxal-phosphate-dependent aminotransferase family. Histidinol-phosphate aminotransferase subfamily.</text>
</comment>
<protein>
    <recommendedName>
        <fullName>Histidinol-phosphate aminotransferase 2</fullName>
        <ecNumber>2.6.1.9</ecNumber>
    </recommendedName>
    <alternativeName>
        <fullName>Imidazole acetol-phosphate transaminase 2</fullName>
    </alternativeName>
</protein>
<accession>Q9CMI7</accession>